<sequence>MSGSSMYKTKLCILFNKTGDCSRPNCTFAHGNAELRRPGESSFTGRRHNMDSDLRDRRHNMDSDLRDRLGRQFSPERRPSLDRSGRRVQRFSGHDNSMPFENRRDKDYRENRRFDERRDYAGGLKVGNRIEDRAEDGRNKFHGYNNVLEEQLKDVEMDVKMLTDDKLRLEASVERKAHEVDILTSRIQELETQLDREKDECRRITSSSKKFVKEYNRFLRAQDDLKRSEARLQKLGNQLSTYLAGSEGNNRDVGLDIVSDEETNGRNLRTACDPHNELQNTSSLSRKKHYVDQYTTKEPVEDGLIGRGEEEKVENEKKRPPCWNMLSSKSYSEEESGAWNDEDTINRSSSKEDNWKRRRFSIGTSATDKVILSTSMAAREFDDVAESEEENPEAANGSPLISLPPPPPFRDAHVQRDEDDVNGDVMEQKKAYDDDSV</sequence>
<organism>
    <name type="scientific">Arabidopsis thaliana</name>
    <name type="common">Mouse-ear cress</name>
    <dbReference type="NCBI Taxonomy" id="3702"/>
    <lineage>
        <taxon>Eukaryota</taxon>
        <taxon>Viridiplantae</taxon>
        <taxon>Streptophyta</taxon>
        <taxon>Embryophyta</taxon>
        <taxon>Tracheophyta</taxon>
        <taxon>Spermatophyta</taxon>
        <taxon>Magnoliopsida</taxon>
        <taxon>eudicotyledons</taxon>
        <taxon>Gunneridae</taxon>
        <taxon>Pentapetalae</taxon>
        <taxon>rosids</taxon>
        <taxon>malvids</taxon>
        <taxon>Brassicales</taxon>
        <taxon>Brassicaceae</taxon>
        <taxon>Camelineae</taxon>
        <taxon>Arabidopsis</taxon>
    </lineage>
</organism>
<gene>
    <name type="ordered locus">At3g21810</name>
    <name type="ORF">MSD21.12</name>
</gene>
<protein>
    <recommendedName>
        <fullName>Zinc finger CCCH domain-containing protein 40</fullName>
        <shortName>AtC3H40</shortName>
    </recommendedName>
</protein>
<accession>Q93XW7</accession>
<accession>Q9LSY3</accession>
<feature type="chain" id="PRO_0000371995" description="Zinc finger CCCH domain-containing protein 40">
    <location>
        <begin position="1"/>
        <end position="437"/>
    </location>
</feature>
<feature type="zinc finger region" description="C3H1-type" evidence="2">
    <location>
        <begin position="6"/>
        <end position="33"/>
    </location>
</feature>
<feature type="region of interest" description="Disordered" evidence="3">
    <location>
        <begin position="35"/>
        <end position="107"/>
    </location>
</feature>
<feature type="region of interest" description="Disordered" evidence="3">
    <location>
        <begin position="266"/>
        <end position="360"/>
    </location>
</feature>
<feature type="region of interest" description="Disordered" evidence="3">
    <location>
        <begin position="380"/>
        <end position="437"/>
    </location>
</feature>
<feature type="coiled-coil region" evidence="1">
    <location>
        <begin position="145"/>
        <end position="244"/>
    </location>
</feature>
<feature type="compositionally biased region" description="Basic and acidic residues" evidence="3">
    <location>
        <begin position="48"/>
        <end position="85"/>
    </location>
</feature>
<feature type="compositionally biased region" description="Basic and acidic residues" evidence="3">
    <location>
        <begin position="307"/>
        <end position="319"/>
    </location>
</feature>
<feature type="compositionally biased region" description="Acidic residues" evidence="3">
    <location>
        <begin position="333"/>
        <end position="343"/>
    </location>
</feature>
<feature type="compositionally biased region" description="Acidic residues" evidence="3">
    <location>
        <begin position="383"/>
        <end position="392"/>
    </location>
</feature>
<feature type="compositionally biased region" description="Basic and acidic residues" evidence="3">
    <location>
        <begin position="426"/>
        <end position="437"/>
    </location>
</feature>
<feature type="modified residue" description="Phosphoserine" evidence="5 6">
    <location>
        <position position="259"/>
    </location>
</feature>
<evidence type="ECO:0000255" key="1"/>
<evidence type="ECO:0000255" key="2">
    <source>
        <dbReference type="PROSITE-ProRule" id="PRU00723"/>
    </source>
</evidence>
<evidence type="ECO:0000256" key="3">
    <source>
        <dbReference type="SAM" id="MobiDB-lite"/>
    </source>
</evidence>
<evidence type="ECO:0000305" key="4"/>
<evidence type="ECO:0007744" key="5">
    <source>
    </source>
</evidence>
<evidence type="ECO:0007744" key="6">
    <source>
    </source>
</evidence>
<name>C3H40_ARATH</name>
<comment type="interaction">
    <interactant intactId="EBI-15195363">
        <id>Q93XW7</id>
    </interactant>
    <interactant intactId="EBI-15191747">
        <id>Q9SFV2</id>
        <label>FHA2</label>
    </interactant>
    <organismsDiffer>false</organismsDiffer>
    <experiments>3</experiments>
</comment>
<comment type="sequence caution" evidence="4">
    <conflict type="erroneous gene model prediction">
        <sequence resource="EMBL-CDS" id="BAB02843"/>
    </conflict>
</comment>
<dbReference type="EMBL" id="AB025634">
    <property type="protein sequence ID" value="BAB02843.1"/>
    <property type="status" value="ALT_SEQ"/>
    <property type="molecule type" value="Genomic_DNA"/>
</dbReference>
<dbReference type="EMBL" id="CP002686">
    <property type="protein sequence ID" value="AEE76554.1"/>
    <property type="molecule type" value="Genomic_DNA"/>
</dbReference>
<dbReference type="EMBL" id="AY059899">
    <property type="protein sequence ID" value="AAL24381.1"/>
    <property type="molecule type" value="mRNA"/>
</dbReference>
<dbReference type="EMBL" id="AY128791">
    <property type="protein sequence ID" value="AAM91191.1"/>
    <property type="molecule type" value="mRNA"/>
</dbReference>
<dbReference type="RefSeq" id="NP_566691.1">
    <property type="nucleotide sequence ID" value="NM_113076.3"/>
</dbReference>
<dbReference type="SMR" id="Q93XW7"/>
<dbReference type="BioGRID" id="7067">
    <property type="interactions" value="9"/>
</dbReference>
<dbReference type="FunCoup" id="Q93XW7">
    <property type="interactions" value="986"/>
</dbReference>
<dbReference type="IntAct" id="Q93XW7">
    <property type="interactions" value="9"/>
</dbReference>
<dbReference type="iPTMnet" id="Q93XW7"/>
<dbReference type="PaxDb" id="3702-AT3G21810.1"/>
<dbReference type="ProteomicsDB" id="240576"/>
<dbReference type="EnsemblPlants" id="AT3G21810.1">
    <property type="protein sequence ID" value="AT3G21810.1"/>
    <property type="gene ID" value="AT3G21810"/>
</dbReference>
<dbReference type="GeneID" id="821735"/>
<dbReference type="Gramene" id="AT3G21810.1">
    <property type="protein sequence ID" value="AT3G21810.1"/>
    <property type="gene ID" value="AT3G21810"/>
</dbReference>
<dbReference type="KEGG" id="ath:AT3G21810"/>
<dbReference type="Araport" id="AT3G21810"/>
<dbReference type="TAIR" id="AT3G21810"/>
<dbReference type="eggNOG" id="ENOG502QQDM">
    <property type="taxonomic scope" value="Eukaryota"/>
</dbReference>
<dbReference type="HOGENOM" id="CLU_052898_0_1_1"/>
<dbReference type="InParanoid" id="Q93XW7"/>
<dbReference type="OMA" id="EAYNNHS"/>
<dbReference type="PhylomeDB" id="Q93XW7"/>
<dbReference type="PRO" id="PR:Q93XW7"/>
<dbReference type="Proteomes" id="UP000006548">
    <property type="component" value="Chromosome 3"/>
</dbReference>
<dbReference type="ExpressionAtlas" id="Q93XW7">
    <property type="expression patterns" value="baseline and differential"/>
</dbReference>
<dbReference type="GO" id="GO:0003677">
    <property type="term" value="F:DNA binding"/>
    <property type="evidence" value="ECO:0007669"/>
    <property type="project" value="UniProtKB-KW"/>
</dbReference>
<dbReference type="GO" id="GO:0008270">
    <property type="term" value="F:zinc ion binding"/>
    <property type="evidence" value="ECO:0007669"/>
    <property type="project" value="UniProtKB-KW"/>
</dbReference>
<dbReference type="Gene3D" id="4.10.1000.10">
    <property type="entry name" value="Zinc finger, CCCH-type"/>
    <property type="match status" value="1"/>
</dbReference>
<dbReference type="InterPro" id="IPR045868">
    <property type="entry name" value="Znf_C3H13/40"/>
</dbReference>
<dbReference type="InterPro" id="IPR000571">
    <property type="entry name" value="Znf_CCCH"/>
</dbReference>
<dbReference type="InterPro" id="IPR036855">
    <property type="entry name" value="Znf_CCCH_sf"/>
</dbReference>
<dbReference type="PANTHER" id="PTHR38160">
    <property type="entry name" value="ZINC FINGER CCCH DOMAIN-CONTAINING PROTEIN 40"/>
    <property type="match status" value="1"/>
</dbReference>
<dbReference type="PANTHER" id="PTHR38160:SF1">
    <property type="entry name" value="ZINC FINGER CCCH DOMAIN-CONTAINING PROTEIN 40"/>
    <property type="match status" value="1"/>
</dbReference>
<dbReference type="Pfam" id="PF00642">
    <property type="entry name" value="zf-CCCH"/>
    <property type="match status" value="1"/>
</dbReference>
<dbReference type="SUPFAM" id="SSF90229">
    <property type="entry name" value="CCCH zinc finger"/>
    <property type="match status" value="1"/>
</dbReference>
<dbReference type="PROSITE" id="PS50103">
    <property type="entry name" value="ZF_C3H1"/>
    <property type="match status" value="1"/>
</dbReference>
<reference key="1">
    <citation type="journal article" date="2000" name="DNA Res.">
        <title>Structural analysis of Arabidopsis thaliana chromosome 3. I. Sequence features of the regions of 4,504,864 bp covered by sixty P1 and TAC clones.</title>
        <authorList>
            <person name="Sato S."/>
            <person name="Nakamura Y."/>
            <person name="Kaneko T."/>
            <person name="Katoh T."/>
            <person name="Asamizu E."/>
            <person name="Tabata S."/>
        </authorList>
    </citation>
    <scope>NUCLEOTIDE SEQUENCE [LARGE SCALE GENOMIC DNA]</scope>
    <source>
        <strain>cv. Columbia</strain>
    </source>
</reference>
<reference key="2">
    <citation type="journal article" date="2017" name="Plant J.">
        <title>Araport11: a complete reannotation of the Arabidopsis thaliana reference genome.</title>
        <authorList>
            <person name="Cheng C.Y."/>
            <person name="Krishnakumar V."/>
            <person name="Chan A.P."/>
            <person name="Thibaud-Nissen F."/>
            <person name="Schobel S."/>
            <person name="Town C.D."/>
        </authorList>
    </citation>
    <scope>GENOME REANNOTATION</scope>
    <source>
        <strain>cv. Columbia</strain>
    </source>
</reference>
<reference key="3">
    <citation type="journal article" date="2003" name="Science">
        <title>Empirical analysis of transcriptional activity in the Arabidopsis genome.</title>
        <authorList>
            <person name="Yamada K."/>
            <person name="Lim J."/>
            <person name="Dale J.M."/>
            <person name="Chen H."/>
            <person name="Shinn P."/>
            <person name="Palm C.J."/>
            <person name="Southwick A.M."/>
            <person name="Wu H.C."/>
            <person name="Kim C.J."/>
            <person name="Nguyen M."/>
            <person name="Pham P.K."/>
            <person name="Cheuk R.F."/>
            <person name="Karlin-Newmann G."/>
            <person name="Liu S.X."/>
            <person name="Lam B."/>
            <person name="Sakano H."/>
            <person name="Wu T."/>
            <person name="Yu G."/>
            <person name="Miranda M."/>
            <person name="Quach H.L."/>
            <person name="Tripp M."/>
            <person name="Chang C.H."/>
            <person name="Lee J.M."/>
            <person name="Toriumi M.J."/>
            <person name="Chan M.M."/>
            <person name="Tang C.C."/>
            <person name="Onodera C.S."/>
            <person name="Deng J.M."/>
            <person name="Akiyama K."/>
            <person name="Ansari Y."/>
            <person name="Arakawa T."/>
            <person name="Banh J."/>
            <person name="Banno F."/>
            <person name="Bowser L."/>
            <person name="Brooks S.Y."/>
            <person name="Carninci P."/>
            <person name="Chao Q."/>
            <person name="Choy N."/>
            <person name="Enju A."/>
            <person name="Goldsmith A.D."/>
            <person name="Gurjal M."/>
            <person name="Hansen N.F."/>
            <person name="Hayashizaki Y."/>
            <person name="Johnson-Hopson C."/>
            <person name="Hsuan V.W."/>
            <person name="Iida K."/>
            <person name="Karnes M."/>
            <person name="Khan S."/>
            <person name="Koesema E."/>
            <person name="Ishida J."/>
            <person name="Jiang P.X."/>
            <person name="Jones T."/>
            <person name="Kawai J."/>
            <person name="Kamiya A."/>
            <person name="Meyers C."/>
            <person name="Nakajima M."/>
            <person name="Narusaka M."/>
            <person name="Seki M."/>
            <person name="Sakurai T."/>
            <person name="Satou M."/>
            <person name="Tamse R."/>
            <person name="Vaysberg M."/>
            <person name="Wallender E.K."/>
            <person name="Wong C."/>
            <person name="Yamamura Y."/>
            <person name="Yuan S."/>
            <person name="Shinozaki K."/>
            <person name="Davis R.W."/>
            <person name="Theologis A."/>
            <person name="Ecker J.R."/>
        </authorList>
    </citation>
    <scope>NUCLEOTIDE SEQUENCE [LARGE SCALE MRNA]</scope>
    <source>
        <strain>cv. Columbia</strain>
    </source>
</reference>
<reference key="4">
    <citation type="journal article" date="2008" name="BMC Genomics">
        <title>Genome-wide analysis of CCCH zinc finger family in Arabidopsis and rice.</title>
        <authorList>
            <person name="Wang D."/>
            <person name="Guo Y."/>
            <person name="Wu C."/>
            <person name="Yang G."/>
            <person name="Li Y."/>
            <person name="Zheng C."/>
        </authorList>
    </citation>
    <scope>NOMENCLATURE</scope>
</reference>
<reference key="5">
    <citation type="journal article" date="2009" name="J. Proteomics">
        <title>Phosphoproteomic analysis of nuclei-enriched fractions from Arabidopsis thaliana.</title>
        <authorList>
            <person name="Jones A.M.E."/>
            <person name="MacLean D."/>
            <person name="Studholme D.J."/>
            <person name="Serna-Sanz A."/>
            <person name="Andreasson E."/>
            <person name="Rathjen J.P."/>
            <person name="Peck S.C."/>
        </authorList>
    </citation>
    <scope>PHOSPHORYLATION [LARGE SCALE ANALYSIS] AT SER-259</scope>
    <scope>IDENTIFICATION BY MASS SPECTROMETRY [LARGE SCALE ANALYSIS]</scope>
    <source>
        <strain>cv. Columbia</strain>
    </source>
</reference>
<reference key="6">
    <citation type="journal article" date="2009" name="Plant Physiol.">
        <title>Large-scale Arabidopsis phosphoproteome profiling reveals novel chloroplast kinase substrates and phosphorylation networks.</title>
        <authorList>
            <person name="Reiland S."/>
            <person name="Messerli G."/>
            <person name="Baerenfaller K."/>
            <person name="Gerrits B."/>
            <person name="Endler A."/>
            <person name="Grossmann J."/>
            <person name="Gruissem W."/>
            <person name="Baginsky S."/>
        </authorList>
    </citation>
    <scope>PHOSPHORYLATION [LARGE SCALE ANALYSIS] AT SER-259</scope>
    <scope>IDENTIFICATION BY MASS SPECTROMETRY [LARGE SCALE ANALYSIS]</scope>
</reference>
<proteinExistence type="evidence at protein level"/>
<keyword id="KW-0175">Coiled coil</keyword>
<keyword id="KW-0238">DNA-binding</keyword>
<keyword id="KW-0479">Metal-binding</keyword>
<keyword id="KW-0597">Phosphoprotein</keyword>
<keyword id="KW-1185">Reference proteome</keyword>
<keyword id="KW-0862">Zinc</keyword>
<keyword id="KW-0863">Zinc-finger</keyword>